<organismHost>
    <name type="scientific">Antilocapra americana</name>
    <name type="common">Pronghorn</name>
    <dbReference type="NCBI Taxonomy" id="9891"/>
</organismHost>
<organismHost>
    <name type="scientific">Bos taurus</name>
    <name type="common">Bovine</name>
    <dbReference type="NCBI Taxonomy" id="9913"/>
</organismHost>
<organismHost>
    <name type="scientific">Capra hircus</name>
    <name type="common">Goat</name>
    <dbReference type="NCBI Taxonomy" id="9925"/>
</organismHost>
<organismHost>
    <name type="scientific">Culicoides variipennis</name>
    <name type="common">Biting midge</name>
    <dbReference type="NCBI Taxonomy" id="46212"/>
</organismHost>
<organismHost>
    <name type="scientific">Ovis aries</name>
    <name type="common">Sheep</name>
    <dbReference type="NCBI Taxonomy" id="9940"/>
</organismHost>
<sequence length="229" mass="25507">MLSGLIQRFEEEKMKHNQERVEELSLVHVDDTISQPPRYAPSAPMPSSMPTVALEILDKAMSNTTGATQTQKAEKAAFASYAEAFRDDVRLRQIKRHVNEQILPKLKSDLGGLKKKRAIIHMTLLIAAVVALLTSVCTLSSDMSVAFKLNGTSAEIPQWFKSLNPMLGVVNLGATFLMMVCAKSERSLNQQIDMIKKEVMKKQSYNDAVRMSFTEFSSVPLDGFELPLT</sequence>
<protein>
    <recommendedName>
        <fullName>Non-structural protein P8</fullName>
    </recommendedName>
    <alternativeName>
        <fullName>Non-structural protein NS3</fullName>
    </alternativeName>
    <component>
        <recommendedName>
            <fullName>Non-structural protein NS3A</fullName>
        </recommendedName>
    </component>
</protein>
<feature type="chain" id="PRO_0000040632" description="Non-structural protein P8">
    <location>
        <begin position="1"/>
        <end position="229"/>
    </location>
</feature>
<feature type="chain" id="PRO_0000040633" description="Non-structural protein NS3A">
    <location>
        <begin position="14"/>
        <end position="229"/>
    </location>
</feature>
<feature type="transmembrane region" description="Helical" evidence="2">
    <location>
        <begin position="119"/>
        <end position="139"/>
    </location>
</feature>
<feature type="transmembrane region" description="Helical" evidence="2">
    <location>
        <begin position="162"/>
        <end position="182"/>
    </location>
</feature>
<comment type="function">
    <text evidence="1">Plays a role in the inhibition of host innate immune response. Interacts with host OPTN and thus inhibits the recruitment of TBK1 to the host Golgi apparatus. In turn, downstream partner IRF3 cannot be activated and IFN-beta production is impaired.</text>
</comment>
<comment type="function">
    <text evidence="1">Facilitates viral particle release either by increasing plasma membrane permeability through a viroporin-like activity or by viral budding.</text>
</comment>
<comment type="subunit">
    <text evidence="1">Forms homooligomers via coiled-coil motif. Interacts with host OPTN; this interaction inhibits innate immune response.</text>
</comment>
<comment type="subcellular location">
    <subcellularLocation>
        <location evidence="1">Host cell membrane</location>
        <topology evidence="2">Multi-pass membrane protein</topology>
    </subcellularLocation>
    <subcellularLocation>
        <location evidence="1">Host Golgi apparatus</location>
    </subcellularLocation>
</comment>
<comment type="similarity">
    <text evidence="3">Belongs to the orbivirus NS3 family.</text>
</comment>
<gene>
    <name type="primary">Segment-10</name>
</gene>
<keyword id="KW-1032">Host cell membrane</keyword>
<keyword id="KW-1040">Host Golgi apparatus</keyword>
<keyword id="KW-1043">Host membrane</keyword>
<keyword id="KW-0945">Host-virus interaction</keyword>
<keyword id="KW-1090">Inhibition of host innate immune response by virus</keyword>
<keyword id="KW-0472">Membrane</keyword>
<keyword id="KW-0812">Transmembrane</keyword>
<keyword id="KW-1133">Transmembrane helix</keyword>
<keyword id="KW-0899">Viral immunoevasion</keyword>
<name>VP8_BTV13</name>
<dbReference type="EMBL" id="L08629">
    <property type="protein sequence ID" value="AAA42836.1"/>
    <property type="molecule type" value="Genomic_RNA"/>
</dbReference>
<dbReference type="GO" id="GO:0044177">
    <property type="term" value="C:host cell Golgi apparatus"/>
    <property type="evidence" value="ECO:0007669"/>
    <property type="project" value="UniProtKB-SubCell"/>
</dbReference>
<dbReference type="GO" id="GO:0020002">
    <property type="term" value="C:host cell plasma membrane"/>
    <property type="evidence" value="ECO:0007669"/>
    <property type="project" value="UniProtKB-SubCell"/>
</dbReference>
<dbReference type="GO" id="GO:0016020">
    <property type="term" value="C:membrane"/>
    <property type="evidence" value="ECO:0007669"/>
    <property type="project" value="UniProtKB-KW"/>
</dbReference>
<dbReference type="GO" id="GO:0052170">
    <property type="term" value="P:symbiont-mediated suppression of host innate immune response"/>
    <property type="evidence" value="ECO:0007669"/>
    <property type="project" value="UniProtKB-KW"/>
</dbReference>
<dbReference type="InterPro" id="IPR002565">
    <property type="entry name" value="Orbi_NS3"/>
</dbReference>
<dbReference type="Pfam" id="PF01616">
    <property type="entry name" value="Orbi_NS3"/>
    <property type="match status" value="1"/>
</dbReference>
<organism>
    <name type="scientific">Bluetongue virus 13 (isolate USA)</name>
    <name type="common">BTV 13</name>
    <dbReference type="NCBI Taxonomy" id="33717"/>
    <lineage>
        <taxon>Viruses</taxon>
        <taxon>Riboviria</taxon>
        <taxon>Orthornavirae</taxon>
        <taxon>Duplornaviricota</taxon>
        <taxon>Resentoviricetes</taxon>
        <taxon>Reovirales</taxon>
        <taxon>Sedoreoviridae</taxon>
        <taxon>Orbivirus</taxon>
        <taxon>Bluetongue virus</taxon>
    </lineage>
</organism>
<proteinExistence type="inferred from homology"/>
<evidence type="ECO:0000250" key="1">
    <source>
        <dbReference type="UniProtKB" id="P08363"/>
    </source>
</evidence>
<evidence type="ECO:0000255" key="2"/>
<evidence type="ECO:0000305" key="3"/>
<accession>Q04685</accession>
<reference key="1">
    <citation type="journal article" date="1992" name="Virus Res.">
        <title>Sequence conservation among the cognate nonstructural NS3/3A protein genes of six bluetongue viruses.</title>
        <authorList>
            <person name="Hwang G.-Y."/>
            <person name="Yang Y.-Y."/>
            <person name="Chiou J.-F."/>
            <person name="Li J.K.-K."/>
        </authorList>
    </citation>
    <scope>NUCLEOTIDE SEQUENCE [GENOMIC RNA]</scope>
</reference>